<name>ACKA_HELMI</name>
<feature type="chain" id="PRO_1000089978" description="Acetate kinase">
    <location>
        <begin position="1"/>
        <end position="397"/>
    </location>
</feature>
<feature type="active site" description="Proton donor/acceptor" evidence="1">
    <location>
        <position position="148"/>
    </location>
</feature>
<feature type="binding site" evidence="1">
    <location>
        <position position="7"/>
    </location>
    <ligand>
        <name>Mg(2+)</name>
        <dbReference type="ChEBI" id="CHEBI:18420"/>
    </ligand>
</feature>
<feature type="binding site" evidence="1">
    <location>
        <position position="14"/>
    </location>
    <ligand>
        <name>ATP</name>
        <dbReference type="ChEBI" id="CHEBI:30616"/>
    </ligand>
</feature>
<feature type="binding site" evidence="1">
    <location>
        <position position="91"/>
    </location>
    <ligand>
        <name>substrate</name>
    </ligand>
</feature>
<feature type="binding site" evidence="1">
    <location>
        <begin position="208"/>
        <end position="212"/>
    </location>
    <ligand>
        <name>ATP</name>
        <dbReference type="ChEBI" id="CHEBI:30616"/>
    </ligand>
</feature>
<feature type="binding site" evidence="1">
    <location>
        <begin position="283"/>
        <end position="285"/>
    </location>
    <ligand>
        <name>ATP</name>
        <dbReference type="ChEBI" id="CHEBI:30616"/>
    </ligand>
</feature>
<feature type="binding site" evidence="1">
    <location>
        <begin position="331"/>
        <end position="335"/>
    </location>
    <ligand>
        <name>ATP</name>
        <dbReference type="ChEBI" id="CHEBI:30616"/>
    </ligand>
</feature>
<feature type="binding site" evidence="1">
    <location>
        <position position="383"/>
    </location>
    <ligand>
        <name>Mg(2+)</name>
        <dbReference type="ChEBI" id="CHEBI:18420"/>
    </ligand>
</feature>
<feature type="site" description="Transition state stabilizer" evidence="1">
    <location>
        <position position="180"/>
    </location>
</feature>
<feature type="site" description="Transition state stabilizer" evidence="1">
    <location>
        <position position="241"/>
    </location>
</feature>
<keyword id="KW-0067">ATP-binding</keyword>
<keyword id="KW-0963">Cytoplasm</keyword>
<keyword id="KW-0418">Kinase</keyword>
<keyword id="KW-0460">Magnesium</keyword>
<keyword id="KW-0479">Metal-binding</keyword>
<keyword id="KW-0547">Nucleotide-binding</keyword>
<keyword id="KW-1185">Reference proteome</keyword>
<keyword id="KW-0808">Transferase</keyword>
<reference key="1">
    <citation type="journal article" date="2008" name="J. Bacteriol.">
        <title>The genome of Heliobacterium modesticaldum, a phototrophic representative of the Firmicutes containing the simplest photosynthetic apparatus.</title>
        <authorList>
            <person name="Sattley W.M."/>
            <person name="Madigan M.T."/>
            <person name="Swingley W.D."/>
            <person name="Cheung P.C."/>
            <person name="Clocksin K.M."/>
            <person name="Conrad A.L."/>
            <person name="Dejesa L.C."/>
            <person name="Honchak B.M."/>
            <person name="Jung D.O."/>
            <person name="Karbach L.E."/>
            <person name="Kurdoglu A."/>
            <person name="Lahiri S."/>
            <person name="Mastrian S.D."/>
            <person name="Page L.E."/>
            <person name="Taylor H.L."/>
            <person name="Wang Z.T."/>
            <person name="Raymond J."/>
            <person name="Chen M."/>
            <person name="Blankenship R.E."/>
            <person name="Touchman J.W."/>
        </authorList>
    </citation>
    <scope>NUCLEOTIDE SEQUENCE [LARGE SCALE GENOMIC DNA]</scope>
    <source>
        <strain>ATCC 51547 / Ice1</strain>
    </source>
</reference>
<comment type="function">
    <text evidence="1">Catalyzes the formation of acetyl phosphate from acetate and ATP. Can also catalyze the reverse reaction.</text>
</comment>
<comment type="catalytic activity">
    <reaction evidence="1">
        <text>acetate + ATP = acetyl phosphate + ADP</text>
        <dbReference type="Rhea" id="RHEA:11352"/>
        <dbReference type="ChEBI" id="CHEBI:22191"/>
        <dbReference type="ChEBI" id="CHEBI:30089"/>
        <dbReference type="ChEBI" id="CHEBI:30616"/>
        <dbReference type="ChEBI" id="CHEBI:456216"/>
        <dbReference type="EC" id="2.7.2.1"/>
    </reaction>
</comment>
<comment type="cofactor">
    <cofactor evidence="1">
        <name>Mg(2+)</name>
        <dbReference type="ChEBI" id="CHEBI:18420"/>
    </cofactor>
    <cofactor evidence="1">
        <name>Mn(2+)</name>
        <dbReference type="ChEBI" id="CHEBI:29035"/>
    </cofactor>
    <text evidence="1">Mg(2+). Can also accept Mn(2+).</text>
</comment>
<comment type="pathway">
    <text evidence="1">Metabolic intermediate biosynthesis; acetyl-CoA biosynthesis; acetyl-CoA from acetate: step 1/2.</text>
</comment>
<comment type="subunit">
    <text evidence="1">Homodimer.</text>
</comment>
<comment type="subcellular location">
    <subcellularLocation>
        <location evidence="1">Cytoplasm</location>
    </subcellularLocation>
</comment>
<comment type="similarity">
    <text evidence="1">Belongs to the acetokinase family.</text>
</comment>
<proteinExistence type="inferred from homology"/>
<evidence type="ECO:0000255" key="1">
    <source>
        <dbReference type="HAMAP-Rule" id="MF_00020"/>
    </source>
</evidence>
<accession>B0TGV2</accession>
<organism>
    <name type="scientific">Heliobacterium modesticaldum (strain ATCC 51547 / Ice1)</name>
    <dbReference type="NCBI Taxonomy" id="498761"/>
    <lineage>
        <taxon>Bacteria</taxon>
        <taxon>Bacillati</taxon>
        <taxon>Bacillota</taxon>
        <taxon>Clostridia</taxon>
        <taxon>Eubacteriales</taxon>
        <taxon>Heliobacteriaceae</taxon>
        <taxon>Heliomicrobium</taxon>
    </lineage>
</organism>
<sequence>MIVLVINSGSSSLKYQLFDMRKEALLAKGLVERIGLSGSMLTHRPIGKDQVVIETEILNHDRAIQLTVEALTHEDHGVVASMREIDAVGHRVAHGGDTFSDSAVVNEQSLANIRALFEVAPLHNPPAVMGIEACQHMLPGVPQVAVFDTAFHQTIPGYAYNYALPYELAAKHSLRRYGFHGTSHKYVAQWAAAMLGRPLEDLRIITCHLGNGASITAIDRGRSVDTSMGFTPLEGLIMGTRVGDMDPAAVPFLMEKEGLTTGQINDLMNKKSGVLGVSGVSSDFRDLEEEAAKGNERCQLALDMFAYRVKKYIGAYAAVMNGVDAIVFTAGLGENSPSMRQSVCSGLSYLGVQLDEEKNKGRGEADISAAGATCRVMVVPTNEELMIARDTYRLLKG</sequence>
<gene>
    <name evidence="1" type="primary">ackA</name>
    <name type="ordered locus">Helmi_20880</name>
    <name type="ORF">HM1_2157</name>
</gene>
<protein>
    <recommendedName>
        <fullName evidence="1">Acetate kinase</fullName>
        <ecNumber evidence="1">2.7.2.1</ecNumber>
    </recommendedName>
    <alternativeName>
        <fullName evidence="1">Acetokinase</fullName>
    </alternativeName>
</protein>
<dbReference type="EC" id="2.7.2.1" evidence="1"/>
<dbReference type="EMBL" id="CP000930">
    <property type="protein sequence ID" value="ABZ84713.1"/>
    <property type="molecule type" value="Genomic_DNA"/>
</dbReference>
<dbReference type="RefSeq" id="WP_012283213.1">
    <property type="nucleotide sequence ID" value="NC_010337.2"/>
</dbReference>
<dbReference type="SMR" id="B0TGV2"/>
<dbReference type="STRING" id="498761.HM1_2157"/>
<dbReference type="KEGG" id="hmo:HM1_2157"/>
<dbReference type="eggNOG" id="COG0282">
    <property type="taxonomic scope" value="Bacteria"/>
</dbReference>
<dbReference type="HOGENOM" id="CLU_020352_0_1_9"/>
<dbReference type="OrthoDB" id="9802453at2"/>
<dbReference type="UniPathway" id="UPA00340">
    <property type="reaction ID" value="UER00458"/>
</dbReference>
<dbReference type="Proteomes" id="UP000008550">
    <property type="component" value="Chromosome"/>
</dbReference>
<dbReference type="GO" id="GO:0005737">
    <property type="term" value="C:cytoplasm"/>
    <property type="evidence" value="ECO:0007669"/>
    <property type="project" value="UniProtKB-SubCell"/>
</dbReference>
<dbReference type="GO" id="GO:0008776">
    <property type="term" value="F:acetate kinase activity"/>
    <property type="evidence" value="ECO:0007669"/>
    <property type="project" value="UniProtKB-UniRule"/>
</dbReference>
<dbReference type="GO" id="GO:0005524">
    <property type="term" value="F:ATP binding"/>
    <property type="evidence" value="ECO:0007669"/>
    <property type="project" value="UniProtKB-KW"/>
</dbReference>
<dbReference type="GO" id="GO:0000287">
    <property type="term" value="F:magnesium ion binding"/>
    <property type="evidence" value="ECO:0007669"/>
    <property type="project" value="UniProtKB-UniRule"/>
</dbReference>
<dbReference type="GO" id="GO:0006083">
    <property type="term" value="P:acetate metabolic process"/>
    <property type="evidence" value="ECO:0007669"/>
    <property type="project" value="TreeGrafter"/>
</dbReference>
<dbReference type="GO" id="GO:0006085">
    <property type="term" value="P:acetyl-CoA biosynthetic process"/>
    <property type="evidence" value="ECO:0007669"/>
    <property type="project" value="UniProtKB-UniRule"/>
</dbReference>
<dbReference type="CDD" id="cd24010">
    <property type="entry name" value="ASKHA_NBD_AcK_PK"/>
    <property type="match status" value="1"/>
</dbReference>
<dbReference type="Gene3D" id="3.30.420.40">
    <property type="match status" value="2"/>
</dbReference>
<dbReference type="HAMAP" id="MF_00020">
    <property type="entry name" value="Acetate_kinase"/>
    <property type="match status" value="1"/>
</dbReference>
<dbReference type="InterPro" id="IPR004372">
    <property type="entry name" value="Ac/propionate_kinase"/>
</dbReference>
<dbReference type="InterPro" id="IPR000890">
    <property type="entry name" value="Aliphatic_acid_kin_short-chain"/>
</dbReference>
<dbReference type="InterPro" id="IPR023865">
    <property type="entry name" value="Aliphatic_acid_kinase_CS"/>
</dbReference>
<dbReference type="InterPro" id="IPR043129">
    <property type="entry name" value="ATPase_NBD"/>
</dbReference>
<dbReference type="NCBIfam" id="TIGR00016">
    <property type="entry name" value="ackA"/>
    <property type="match status" value="1"/>
</dbReference>
<dbReference type="PANTHER" id="PTHR21060">
    <property type="entry name" value="ACETATE KINASE"/>
    <property type="match status" value="1"/>
</dbReference>
<dbReference type="PANTHER" id="PTHR21060:SF15">
    <property type="entry name" value="ACETATE KINASE-RELATED"/>
    <property type="match status" value="1"/>
</dbReference>
<dbReference type="Pfam" id="PF00871">
    <property type="entry name" value="Acetate_kinase"/>
    <property type="match status" value="1"/>
</dbReference>
<dbReference type="PIRSF" id="PIRSF000722">
    <property type="entry name" value="Acetate_prop_kin"/>
    <property type="match status" value="1"/>
</dbReference>
<dbReference type="PRINTS" id="PR00471">
    <property type="entry name" value="ACETATEKNASE"/>
</dbReference>
<dbReference type="SUPFAM" id="SSF53067">
    <property type="entry name" value="Actin-like ATPase domain"/>
    <property type="match status" value="2"/>
</dbReference>
<dbReference type="PROSITE" id="PS01075">
    <property type="entry name" value="ACETATE_KINASE_1"/>
    <property type="match status" value="1"/>
</dbReference>
<dbReference type="PROSITE" id="PS01076">
    <property type="entry name" value="ACETATE_KINASE_2"/>
    <property type="match status" value="1"/>
</dbReference>